<proteinExistence type="evidence at protein level"/>
<name>IPYR_CHLTR</name>
<reference key="1">
    <citation type="journal article" date="1998" name="Science">
        <title>Genome sequence of an obligate intracellular pathogen of humans: Chlamydia trachomatis.</title>
        <authorList>
            <person name="Stephens R.S."/>
            <person name="Kalman S."/>
            <person name="Lammel C.J."/>
            <person name="Fan J."/>
            <person name="Marathe R."/>
            <person name="Aravind L."/>
            <person name="Mitchell W.P."/>
            <person name="Olinger L."/>
            <person name="Tatusov R.L."/>
            <person name="Zhao Q."/>
            <person name="Koonin E.V."/>
            <person name="Davis R.W."/>
        </authorList>
    </citation>
    <scope>NUCLEOTIDE SEQUENCE [LARGE SCALE GENOMIC DNA]</scope>
    <source>
        <strain>ATCC VR-885 / DSM 19411 / UW-3/Cx</strain>
    </source>
</reference>
<keyword id="KW-0002">3D-structure</keyword>
<keyword id="KW-0963">Cytoplasm</keyword>
<keyword id="KW-0378">Hydrolase</keyword>
<keyword id="KW-0460">Magnesium</keyword>
<keyword id="KW-0479">Metal-binding</keyword>
<keyword id="KW-1185">Reference proteome</keyword>
<evidence type="ECO:0000255" key="1">
    <source>
        <dbReference type="HAMAP-Rule" id="MF_00209"/>
    </source>
</evidence>
<evidence type="ECO:0007829" key="2">
    <source>
        <dbReference type="PDB" id="6WE5"/>
    </source>
</evidence>
<accession>O84777</accession>
<comment type="function">
    <text evidence="1">Catalyzes the hydrolysis of inorganic pyrophosphate (PPi) forming two phosphate ions.</text>
</comment>
<comment type="catalytic activity">
    <reaction evidence="1">
        <text>diphosphate + H2O = 2 phosphate + H(+)</text>
        <dbReference type="Rhea" id="RHEA:24576"/>
        <dbReference type="ChEBI" id="CHEBI:15377"/>
        <dbReference type="ChEBI" id="CHEBI:15378"/>
        <dbReference type="ChEBI" id="CHEBI:33019"/>
        <dbReference type="ChEBI" id="CHEBI:43474"/>
        <dbReference type="EC" id="3.6.1.1"/>
    </reaction>
</comment>
<comment type="cofactor">
    <cofactor evidence="1">
        <name>Mg(2+)</name>
        <dbReference type="ChEBI" id="CHEBI:18420"/>
    </cofactor>
</comment>
<comment type="subunit">
    <text evidence="1">Homohexamer.</text>
</comment>
<comment type="subcellular location">
    <subcellularLocation>
        <location evidence="1">Cytoplasm</location>
    </subcellularLocation>
</comment>
<comment type="similarity">
    <text evidence="1">Belongs to the PPase family.</text>
</comment>
<dbReference type="EC" id="3.6.1.1" evidence="1"/>
<dbReference type="EMBL" id="AE001273">
    <property type="protein sequence ID" value="AAC68367.1"/>
    <property type="molecule type" value="Genomic_DNA"/>
</dbReference>
<dbReference type="PIR" id="G71473">
    <property type="entry name" value="G71473"/>
</dbReference>
<dbReference type="RefSeq" id="NP_220291.1">
    <property type="nucleotide sequence ID" value="NC_000117.1"/>
</dbReference>
<dbReference type="RefSeq" id="WP_009872152.1">
    <property type="nucleotide sequence ID" value="NC_000117.1"/>
</dbReference>
<dbReference type="PDB" id="6WE5">
    <property type="method" value="X-ray"/>
    <property type="resolution" value="2.25 A"/>
    <property type="chains" value="A/B/C=1-209"/>
</dbReference>
<dbReference type="PDBsum" id="6WE5"/>
<dbReference type="SMR" id="O84777"/>
<dbReference type="STRING" id="272561.CT_772"/>
<dbReference type="EnsemblBacteria" id="AAC68367">
    <property type="protein sequence ID" value="AAC68367"/>
    <property type="gene ID" value="CT_772"/>
</dbReference>
<dbReference type="GeneID" id="884578"/>
<dbReference type="KEGG" id="ctr:CT_772"/>
<dbReference type="PATRIC" id="fig|272561.5.peg.848"/>
<dbReference type="HOGENOM" id="CLU_073198_2_1_0"/>
<dbReference type="InParanoid" id="O84777"/>
<dbReference type="OrthoDB" id="5187599at2"/>
<dbReference type="Proteomes" id="UP000000431">
    <property type="component" value="Chromosome"/>
</dbReference>
<dbReference type="GO" id="GO:0005829">
    <property type="term" value="C:cytosol"/>
    <property type="evidence" value="ECO:0000318"/>
    <property type="project" value="GO_Central"/>
</dbReference>
<dbReference type="GO" id="GO:0004427">
    <property type="term" value="F:inorganic diphosphate phosphatase activity"/>
    <property type="evidence" value="ECO:0000318"/>
    <property type="project" value="GO_Central"/>
</dbReference>
<dbReference type="GO" id="GO:0000287">
    <property type="term" value="F:magnesium ion binding"/>
    <property type="evidence" value="ECO:0000318"/>
    <property type="project" value="GO_Central"/>
</dbReference>
<dbReference type="GO" id="GO:0006796">
    <property type="term" value="P:phosphate-containing compound metabolic process"/>
    <property type="evidence" value="ECO:0000318"/>
    <property type="project" value="GO_Central"/>
</dbReference>
<dbReference type="CDD" id="cd00412">
    <property type="entry name" value="pyrophosphatase"/>
    <property type="match status" value="1"/>
</dbReference>
<dbReference type="FunFam" id="3.90.80.10:FF:000016">
    <property type="entry name" value="Inorganic pyrophosphatase"/>
    <property type="match status" value="1"/>
</dbReference>
<dbReference type="Gene3D" id="3.90.80.10">
    <property type="entry name" value="Inorganic pyrophosphatase"/>
    <property type="match status" value="1"/>
</dbReference>
<dbReference type="HAMAP" id="MF_00209">
    <property type="entry name" value="Inorganic_PPase"/>
    <property type="match status" value="1"/>
</dbReference>
<dbReference type="InterPro" id="IPR008162">
    <property type="entry name" value="Pyrophosphatase"/>
</dbReference>
<dbReference type="InterPro" id="IPR036649">
    <property type="entry name" value="Pyrophosphatase_sf"/>
</dbReference>
<dbReference type="NCBIfam" id="NF001886">
    <property type="entry name" value="PRK00642.1"/>
    <property type="match status" value="1"/>
</dbReference>
<dbReference type="PANTHER" id="PTHR10286">
    <property type="entry name" value="INORGANIC PYROPHOSPHATASE"/>
    <property type="match status" value="1"/>
</dbReference>
<dbReference type="Pfam" id="PF00719">
    <property type="entry name" value="Pyrophosphatase"/>
    <property type="match status" value="1"/>
</dbReference>
<dbReference type="SUPFAM" id="SSF50324">
    <property type="entry name" value="Inorganic pyrophosphatase"/>
    <property type="match status" value="1"/>
</dbReference>
<dbReference type="PROSITE" id="PS00387">
    <property type="entry name" value="PPASE"/>
    <property type="match status" value="1"/>
</dbReference>
<gene>
    <name evidence="1" type="primary">ppa</name>
    <name type="ordered locus">CT_772</name>
</gene>
<organism>
    <name type="scientific">Chlamydia trachomatis serovar D (strain ATCC VR-885 / DSM 19411 / UW-3/Cx)</name>
    <dbReference type="NCBI Taxonomy" id="272561"/>
    <lineage>
        <taxon>Bacteria</taxon>
        <taxon>Pseudomonadati</taxon>
        <taxon>Chlamydiota</taxon>
        <taxon>Chlamydiia</taxon>
        <taxon>Chlamydiales</taxon>
        <taxon>Chlamydiaceae</taxon>
        <taxon>Chlamydia/Chlamydophila group</taxon>
        <taxon>Chlamydia</taxon>
    </lineage>
</organism>
<sequence>MSKTPLSIAHPWHGPVLTRDDYESLCCYIEITPADSVKFELDKETGILKVDRPQKFSNFCPCLYGLLPKTYCGDLSGEYSGQQSNRENIKGDGDPLDICVLTEKNITQGNILLQARPIGGIRILDSEEADDKIIAVLEDDLVYGNIEDISECPGTVLDMIQHYFLTYKATPESLIQAKPAKIEIVGLYGKKEAQKVIRLAHEDYCNLFM</sequence>
<feature type="chain" id="PRO_0000137492" description="Inorganic pyrophosphatase">
    <location>
        <begin position="1"/>
        <end position="209"/>
    </location>
</feature>
<feature type="binding site" evidence="1">
    <location>
        <position position="38"/>
    </location>
    <ligand>
        <name>substrate</name>
    </ligand>
</feature>
<feature type="binding site" evidence="1">
    <location>
        <position position="52"/>
    </location>
    <ligand>
        <name>substrate</name>
    </ligand>
</feature>
<feature type="binding site" evidence="1">
    <location>
        <position position="64"/>
    </location>
    <ligand>
        <name>substrate</name>
    </ligand>
</feature>
<feature type="binding site" evidence="1">
    <location>
        <position position="92"/>
    </location>
    <ligand>
        <name>Mg(2+)</name>
        <dbReference type="ChEBI" id="CHEBI:18420"/>
        <label>1</label>
    </ligand>
</feature>
<feature type="binding site" evidence="1">
    <location>
        <position position="97"/>
    </location>
    <ligand>
        <name>Mg(2+)</name>
        <dbReference type="ChEBI" id="CHEBI:18420"/>
        <label>1</label>
    </ligand>
</feature>
<feature type="binding site" evidence="1">
    <location>
        <position position="97"/>
    </location>
    <ligand>
        <name>Mg(2+)</name>
        <dbReference type="ChEBI" id="CHEBI:18420"/>
        <label>2</label>
    </ligand>
</feature>
<feature type="binding site" evidence="1">
    <location>
        <position position="130"/>
    </location>
    <ligand>
        <name>Mg(2+)</name>
        <dbReference type="ChEBI" id="CHEBI:18420"/>
        <label>1</label>
    </ligand>
</feature>
<feature type="binding site" evidence="1">
    <location>
        <position position="167"/>
    </location>
    <ligand>
        <name>substrate</name>
    </ligand>
</feature>
<feature type="turn" evidence="2">
    <location>
        <begin position="11"/>
        <end position="13"/>
    </location>
</feature>
<feature type="strand" evidence="2">
    <location>
        <begin position="23"/>
        <end position="31"/>
    </location>
</feature>
<feature type="strand" evidence="2">
    <location>
        <begin position="36"/>
        <end position="41"/>
    </location>
</feature>
<feature type="turn" evidence="2">
    <location>
        <begin position="43"/>
        <end position="45"/>
    </location>
</feature>
<feature type="strand" evidence="2">
    <location>
        <begin position="48"/>
        <end position="53"/>
    </location>
</feature>
<feature type="strand" evidence="2">
    <location>
        <begin position="55"/>
        <end position="57"/>
    </location>
</feature>
<feature type="strand" evidence="2">
    <location>
        <begin position="61"/>
        <end position="66"/>
    </location>
</feature>
<feature type="helix" evidence="2">
    <location>
        <begin position="74"/>
        <end position="84"/>
    </location>
</feature>
<feature type="strand" evidence="2">
    <location>
        <begin position="97"/>
        <end position="101"/>
    </location>
</feature>
<feature type="strand" evidence="2">
    <location>
        <begin position="110"/>
        <end position="129"/>
    </location>
</feature>
<feature type="strand" evidence="2">
    <location>
        <begin position="132"/>
        <end position="137"/>
    </location>
</feature>
<feature type="turn" evidence="2">
    <location>
        <begin position="141"/>
        <end position="145"/>
    </location>
</feature>
<feature type="helix" evidence="2">
    <location>
        <begin position="149"/>
        <end position="151"/>
    </location>
</feature>
<feature type="helix" evidence="2">
    <location>
        <begin position="154"/>
        <end position="166"/>
    </location>
</feature>
<feature type="helix" evidence="2">
    <location>
        <begin position="171"/>
        <end position="175"/>
    </location>
</feature>
<feature type="strand" evidence="2">
    <location>
        <begin position="181"/>
        <end position="188"/>
    </location>
</feature>
<feature type="helix" evidence="2">
    <location>
        <begin position="190"/>
        <end position="207"/>
    </location>
</feature>
<protein>
    <recommendedName>
        <fullName evidence="1">Inorganic pyrophosphatase</fullName>
        <ecNumber evidence="1">3.6.1.1</ecNumber>
    </recommendedName>
    <alternativeName>
        <fullName evidence="1">Pyrophosphate phospho-hydrolase</fullName>
        <shortName evidence="1">PPase</shortName>
    </alternativeName>
</protein>